<accession>Q9M146</accession>
<accession>Q5HZ43</accession>
<accession>Q94K03</accession>
<proteinExistence type="evidence at transcript level"/>
<reference key="1">
    <citation type="journal article" date="1999" name="Nature">
        <title>Sequence and analysis of chromosome 4 of the plant Arabidopsis thaliana.</title>
        <authorList>
            <person name="Mayer K.F.X."/>
            <person name="Schueller C."/>
            <person name="Wambutt R."/>
            <person name="Murphy G."/>
            <person name="Volckaert G."/>
            <person name="Pohl T."/>
            <person name="Duesterhoeft A."/>
            <person name="Stiekema W."/>
            <person name="Entian K.-D."/>
            <person name="Terryn N."/>
            <person name="Harris B."/>
            <person name="Ansorge W."/>
            <person name="Brandt P."/>
            <person name="Grivell L.A."/>
            <person name="Rieger M."/>
            <person name="Weichselgartner M."/>
            <person name="de Simone V."/>
            <person name="Obermaier B."/>
            <person name="Mache R."/>
            <person name="Mueller M."/>
            <person name="Kreis M."/>
            <person name="Delseny M."/>
            <person name="Puigdomenech P."/>
            <person name="Watson M."/>
            <person name="Schmidtheini T."/>
            <person name="Reichert B."/>
            <person name="Portetelle D."/>
            <person name="Perez-Alonso M."/>
            <person name="Boutry M."/>
            <person name="Bancroft I."/>
            <person name="Vos P."/>
            <person name="Hoheisel J."/>
            <person name="Zimmermann W."/>
            <person name="Wedler H."/>
            <person name="Ridley P."/>
            <person name="Langham S.-A."/>
            <person name="McCullagh B."/>
            <person name="Bilham L."/>
            <person name="Robben J."/>
            <person name="van der Schueren J."/>
            <person name="Grymonprez B."/>
            <person name="Chuang Y.-J."/>
            <person name="Vandenbussche F."/>
            <person name="Braeken M."/>
            <person name="Weltjens I."/>
            <person name="Voet M."/>
            <person name="Bastiaens I."/>
            <person name="Aert R."/>
            <person name="Defoor E."/>
            <person name="Weitzenegger T."/>
            <person name="Bothe G."/>
            <person name="Ramsperger U."/>
            <person name="Hilbert H."/>
            <person name="Braun M."/>
            <person name="Holzer E."/>
            <person name="Brandt A."/>
            <person name="Peters S."/>
            <person name="van Staveren M."/>
            <person name="Dirkse W."/>
            <person name="Mooijman P."/>
            <person name="Klein Lankhorst R."/>
            <person name="Rose M."/>
            <person name="Hauf J."/>
            <person name="Koetter P."/>
            <person name="Berneiser S."/>
            <person name="Hempel S."/>
            <person name="Feldpausch M."/>
            <person name="Lamberth S."/>
            <person name="Van den Daele H."/>
            <person name="De Keyser A."/>
            <person name="Buysshaert C."/>
            <person name="Gielen J."/>
            <person name="Villarroel R."/>
            <person name="De Clercq R."/>
            <person name="van Montagu M."/>
            <person name="Rogers J."/>
            <person name="Cronin A."/>
            <person name="Quail M.A."/>
            <person name="Bray-Allen S."/>
            <person name="Clark L."/>
            <person name="Doggett J."/>
            <person name="Hall S."/>
            <person name="Kay M."/>
            <person name="Lennard N."/>
            <person name="McLay K."/>
            <person name="Mayes R."/>
            <person name="Pettett A."/>
            <person name="Rajandream M.A."/>
            <person name="Lyne M."/>
            <person name="Benes V."/>
            <person name="Rechmann S."/>
            <person name="Borkova D."/>
            <person name="Bloecker H."/>
            <person name="Scharfe M."/>
            <person name="Grimm M."/>
            <person name="Loehnert T.-H."/>
            <person name="Dose S."/>
            <person name="de Haan M."/>
            <person name="Maarse A.C."/>
            <person name="Schaefer M."/>
            <person name="Mueller-Auer S."/>
            <person name="Gabel C."/>
            <person name="Fuchs M."/>
            <person name="Fartmann B."/>
            <person name="Granderath K."/>
            <person name="Dauner D."/>
            <person name="Herzl A."/>
            <person name="Neumann S."/>
            <person name="Argiriou A."/>
            <person name="Vitale D."/>
            <person name="Liguori R."/>
            <person name="Piravandi E."/>
            <person name="Massenet O."/>
            <person name="Quigley F."/>
            <person name="Clabauld G."/>
            <person name="Muendlein A."/>
            <person name="Felber R."/>
            <person name="Schnabl S."/>
            <person name="Hiller R."/>
            <person name="Schmidt W."/>
            <person name="Lecharny A."/>
            <person name="Aubourg S."/>
            <person name="Chefdor F."/>
            <person name="Cooke R."/>
            <person name="Berger C."/>
            <person name="Monfort A."/>
            <person name="Casacuberta E."/>
            <person name="Gibbons T."/>
            <person name="Weber N."/>
            <person name="Vandenbol M."/>
            <person name="Bargues M."/>
            <person name="Terol J."/>
            <person name="Torres A."/>
            <person name="Perez-Perez A."/>
            <person name="Purnelle B."/>
            <person name="Bent E."/>
            <person name="Johnson S."/>
            <person name="Tacon D."/>
            <person name="Jesse T."/>
            <person name="Heijnen L."/>
            <person name="Schwarz S."/>
            <person name="Scholler P."/>
            <person name="Heber S."/>
            <person name="Francs P."/>
            <person name="Bielke C."/>
            <person name="Frishman D."/>
            <person name="Haase D."/>
            <person name="Lemcke K."/>
            <person name="Mewes H.-W."/>
            <person name="Stocker S."/>
            <person name="Zaccaria P."/>
            <person name="Bevan M."/>
            <person name="Wilson R.K."/>
            <person name="de la Bastide M."/>
            <person name="Habermann K."/>
            <person name="Parnell L."/>
            <person name="Dedhia N."/>
            <person name="Gnoj L."/>
            <person name="Schutz K."/>
            <person name="Huang E."/>
            <person name="Spiegel L."/>
            <person name="Sekhon M."/>
            <person name="Murray J."/>
            <person name="Sheet P."/>
            <person name="Cordes M."/>
            <person name="Abu-Threideh J."/>
            <person name="Stoneking T."/>
            <person name="Kalicki J."/>
            <person name="Graves T."/>
            <person name="Harmon G."/>
            <person name="Edwards J."/>
            <person name="Latreille P."/>
            <person name="Courtney L."/>
            <person name="Cloud J."/>
            <person name="Abbott A."/>
            <person name="Scott K."/>
            <person name="Johnson D."/>
            <person name="Minx P."/>
            <person name="Bentley D."/>
            <person name="Fulton B."/>
            <person name="Miller N."/>
            <person name="Greco T."/>
            <person name="Kemp K."/>
            <person name="Kramer J."/>
            <person name="Fulton L."/>
            <person name="Mardis E."/>
            <person name="Dante M."/>
            <person name="Pepin K."/>
            <person name="Hillier L.W."/>
            <person name="Nelson J."/>
            <person name="Spieth J."/>
            <person name="Ryan E."/>
            <person name="Andrews S."/>
            <person name="Geisel C."/>
            <person name="Layman D."/>
            <person name="Du H."/>
            <person name="Ali J."/>
            <person name="Berghoff A."/>
            <person name="Jones K."/>
            <person name="Drone K."/>
            <person name="Cotton M."/>
            <person name="Joshu C."/>
            <person name="Antonoiu B."/>
            <person name="Zidanic M."/>
            <person name="Strong C."/>
            <person name="Sun H."/>
            <person name="Lamar B."/>
            <person name="Yordan C."/>
            <person name="Ma P."/>
            <person name="Zhong J."/>
            <person name="Preston R."/>
            <person name="Vil D."/>
            <person name="Shekher M."/>
            <person name="Matero A."/>
            <person name="Shah R."/>
            <person name="Swaby I.K."/>
            <person name="O'Shaughnessy A."/>
            <person name="Rodriguez M."/>
            <person name="Hoffman J."/>
            <person name="Till S."/>
            <person name="Granat S."/>
            <person name="Shohdy N."/>
            <person name="Hasegawa A."/>
            <person name="Hameed A."/>
            <person name="Lodhi M."/>
            <person name="Johnson A."/>
            <person name="Chen E."/>
            <person name="Marra M.A."/>
            <person name="Martienssen R."/>
            <person name="McCombie W.R."/>
        </authorList>
    </citation>
    <scope>NUCLEOTIDE SEQUENCE [LARGE SCALE GENOMIC DNA]</scope>
    <source>
        <strain>cv. Columbia</strain>
    </source>
</reference>
<reference key="2">
    <citation type="journal article" date="2017" name="Plant J.">
        <title>Araport11: a complete reannotation of the Arabidopsis thaliana reference genome.</title>
        <authorList>
            <person name="Cheng C.Y."/>
            <person name="Krishnakumar V."/>
            <person name="Chan A.P."/>
            <person name="Thibaud-Nissen F."/>
            <person name="Schobel S."/>
            <person name="Town C.D."/>
        </authorList>
    </citation>
    <scope>GENOME REANNOTATION</scope>
    <source>
        <strain>cv. Columbia</strain>
    </source>
</reference>
<reference key="3">
    <citation type="journal article" date="2003" name="Science">
        <title>Empirical analysis of transcriptional activity in the Arabidopsis genome.</title>
        <authorList>
            <person name="Yamada K."/>
            <person name="Lim J."/>
            <person name="Dale J.M."/>
            <person name="Chen H."/>
            <person name="Shinn P."/>
            <person name="Palm C.J."/>
            <person name="Southwick A.M."/>
            <person name="Wu H.C."/>
            <person name="Kim C.J."/>
            <person name="Nguyen M."/>
            <person name="Pham P.K."/>
            <person name="Cheuk R.F."/>
            <person name="Karlin-Newmann G."/>
            <person name="Liu S.X."/>
            <person name="Lam B."/>
            <person name="Sakano H."/>
            <person name="Wu T."/>
            <person name="Yu G."/>
            <person name="Miranda M."/>
            <person name="Quach H.L."/>
            <person name="Tripp M."/>
            <person name="Chang C.H."/>
            <person name="Lee J.M."/>
            <person name="Toriumi M.J."/>
            <person name="Chan M.M."/>
            <person name="Tang C.C."/>
            <person name="Onodera C.S."/>
            <person name="Deng J.M."/>
            <person name="Akiyama K."/>
            <person name="Ansari Y."/>
            <person name="Arakawa T."/>
            <person name="Banh J."/>
            <person name="Banno F."/>
            <person name="Bowser L."/>
            <person name="Brooks S.Y."/>
            <person name="Carninci P."/>
            <person name="Chao Q."/>
            <person name="Choy N."/>
            <person name="Enju A."/>
            <person name="Goldsmith A.D."/>
            <person name="Gurjal M."/>
            <person name="Hansen N.F."/>
            <person name="Hayashizaki Y."/>
            <person name="Johnson-Hopson C."/>
            <person name="Hsuan V.W."/>
            <person name="Iida K."/>
            <person name="Karnes M."/>
            <person name="Khan S."/>
            <person name="Koesema E."/>
            <person name="Ishida J."/>
            <person name="Jiang P.X."/>
            <person name="Jones T."/>
            <person name="Kawai J."/>
            <person name="Kamiya A."/>
            <person name="Meyers C."/>
            <person name="Nakajima M."/>
            <person name="Narusaka M."/>
            <person name="Seki M."/>
            <person name="Sakurai T."/>
            <person name="Satou M."/>
            <person name="Tamse R."/>
            <person name="Vaysberg M."/>
            <person name="Wallender E.K."/>
            <person name="Wong C."/>
            <person name="Yamamura Y."/>
            <person name="Yuan S."/>
            <person name="Shinozaki K."/>
            <person name="Davis R.W."/>
            <person name="Theologis A."/>
            <person name="Ecker J.R."/>
        </authorList>
    </citation>
    <scope>NUCLEOTIDE SEQUENCE [LARGE SCALE MRNA] (ISOFORM 2)</scope>
    <source>
        <strain>cv. Columbia</strain>
    </source>
</reference>
<reference key="4">
    <citation type="submission" date="2005-01" db="EMBL/GenBank/DDBJ databases">
        <title>Arabidopsis ORF clones.</title>
        <authorList>
            <person name="Kim C.J."/>
            <person name="Chen H."/>
            <person name="Cheuk R.F."/>
            <person name="Shinn P."/>
            <person name="Ecker J.R."/>
        </authorList>
    </citation>
    <scope>NUCLEOTIDE SEQUENCE [LARGE SCALE MRNA] (ISOFORM 2)</scope>
    <source>
        <strain>cv. Columbia</strain>
    </source>
</reference>
<reference key="5">
    <citation type="submission" date="2008-07" db="EMBL/GenBank/DDBJ databases">
        <title>Arabidopsis ORF clones.</title>
        <authorList>
            <person name="De Los Reyes C."/>
            <person name="Quan R."/>
            <person name="Chen H."/>
            <person name="Bautista V.R."/>
            <person name="Kim C.J."/>
            <person name="Ecker J.R."/>
        </authorList>
    </citation>
    <scope>NUCLEOTIDE SEQUENCE [LARGE SCALE MRNA] (ISOFORM 1)</scope>
    <source>
        <strain>cv. Columbia</strain>
    </source>
</reference>
<reference key="6">
    <citation type="journal article" date="2011" name="Plant J.">
        <title>Male gametophyte defective 4 encodes a rhamnogalacturonan II xylosyltransferase and is important for growth of pollen tubes and roots in Arabidopsis.</title>
        <authorList>
            <person name="Liu X.L."/>
            <person name="Liu L."/>
            <person name="Niu Q.K."/>
            <person name="Xia C."/>
            <person name="Yang K.Z."/>
            <person name="Li R."/>
            <person name="Chen L.Q."/>
            <person name="Zhang X.Q."/>
            <person name="Zhou Y."/>
            <person name="Ye D."/>
        </authorList>
    </citation>
    <scope>FUNCTION</scope>
    <scope>SUBCELLULAR LOCATION</scope>
    <scope>TISSUE SPECIFICITY</scope>
    <scope>DISRUPTION PHENOTYPE</scope>
</reference>
<reference key="7">
    <citation type="journal article" date="2011" name="Plant Sci.">
        <title>A putative Arabidopsis thaliana glycosyltransferase, At4g01220, which is closely related to three plant cell wall-specific xylosyltransferases, is differentially expressed spatially and temporally.</title>
        <authorList>
            <person name="Fangel J.U."/>
            <person name="Petersen B.L."/>
            <person name="Jensen N.B."/>
            <person name="Willats W.G."/>
            <person name="Bacic A."/>
            <person name="Egelund J."/>
        </authorList>
    </citation>
    <scope>SUBCELLULAR LOCATION</scope>
    <scope>TISSUE SPECIFICITY</scope>
</reference>
<feature type="chain" id="PRO_0000423716" description="UDP-D-xylose:L-fucose alpha-1,3-D-xylosyltransferase MGP4">
    <location>
        <begin position="1"/>
        <end position="360"/>
    </location>
</feature>
<feature type="topological domain" description="Cytoplasmic" evidence="3">
    <location>
        <begin position="1"/>
        <end position="41"/>
    </location>
</feature>
<feature type="transmembrane region" description="Helical; Signal-anchor for type II membrane protein" evidence="3">
    <location>
        <begin position="42"/>
        <end position="62"/>
    </location>
</feature>
<feature type="topological domain" description="Lumenal" evidence="3">
    <location>
        <begin position="63"/>
        <end position="360"/>
    </location>
</feature>
<feature type="region of interest" description="Disordered" evidence="4">
    <location>
        <begin position="1"/>
        <end position="25"/>
    </location>
</feature>
<feature type="short sequence motif" description="DXD motif" evidence="10">
    <location>
        <begin position="191"/>
        <end position="193"/>
    </location>
</feature>
<feature type="compositionally biased region" description="Low complexity" evidence="4">
    <location>
        <begin position="14"/>
        <end position="25"/>
    </location>
</feature>
<feature type="glycosylation site" description="N-linked (GlcNAc...) asparagine" evidence="3">
    <location>
        <position position="93"/>
    </location>
</feature>
<feature type="glycosylation site" description="N-linked (GlcNAc...) asparagine" evidence="3">
    <location>
        <position position="168"/>
    </location>
</feature>
<feature type="glycosylation site" description="N-linked (GlcNAc...) asparagine" evidence="3">
    <location>
        <position position="285"/>
    </location>
</feature>
<feature type="glycosylation site" description="N-linked (GlcNAc...) asparagine" evidence="3">
    <location>
        <position position="310"/>
    </location>
</feature>
<feature type="splice variant" id="VSP_053260" description="In isoform 2." evidence="7 9">
    <original>DMYLLSQA</original>
    <variation>CSFFLVPQ</variation>
    <location>
        <begin position="292"/>
        <end position="299"/>
    </location>
</feature>
<feature type="splice variant" id="VSP_053261" description="In isoform 2." evidence="7 9">
    <location>
        <begin position="300"/>
        <end position="360"/>
    </location>
</feature>
<feature type="sequence conflict" description="In Ref. 3; AAK43874." evidence="10" ref="3">
    <original>L</original>
    <variation>H</variation>
    <location>
        <position position="71"/>
    </location>
</feature>
<sequence>MAQQKFLHQRPIQNPFTNPFSSSPLSTSSISNRPISLLSRNGLLLLLALLVILGVFLPWAGSPLFPSPNKLSPSQSKWRDYSLPQAVKFVAKNGTVIVCAVSYPYLPFLNNWLISVSRQKHQDQVLVIAEDYATLYKVNEKWPGHAVLIPPALDSQTAHKFGSQGFFNFTARRPQHLLEILELGYNVMYNDVDMVWLQDPFQYLEGKHDAYFMDDMTAIKPLDHSHDLPPPGKKGRTYICSCMIFLRPTNGAKLLMKKWIEELETQPWSRAKKANDQPGFNWALNKTANQVDMYLLSQAAFPTGGLYFKNKTWVKETKGKHAIIHNNYIVGFEKKIKRFRDFNLWLVDDHASESPLGKLE</sequence>
<protein>
    <recommendedName>
        <fullName evidence="10">UDP-D-xylose:L-fucose alpha-1,3-D-xylosyltransferase MGP4</fullName>
        <ecNumber evidence="10">2.4.2.-</ecNumber>
    </recommendedName>
    <alternativeName>
        <fullName evidence="8">Protein MALE GAMETOPHYTE DEFECTIVE 4</fullName>
    </alternativeName>
    <alternativeName>
        <fullName evidence="10">Rhamnogalacturonan xylosyltransferase MGP4</fullName>
    </alternativeName>
</protein>
<dbReference type="EC" id="2.4.2.-" evidence="10"/>
<dbReference type="EMBL" id="AL161491">
    <property type="protein sequence ID" value="CAB80931.1"/>
    <property type="molecule type" value="Genomic_DNA"/>
</dbReference>
<dbReference type="EMBL" id="CP002687">
    <property type="protein sequence ID" value="AEE81995.1"/>
    <property type="molecule type" value="Genomic_DNA"/>
</dbReference>
<dbReference type="EMBL" id="AF370497">
    <property type="protein sequence ID" value="AAK43874.1"/>
    <property type="molecule type" value="mRNA"/>
</dbReference>
<dbReference type="EMBL" id="CP002687">
    <property type="protein sequence ID" value="AEE81996.1"/>
    <property type="molecule type" value="Genomic_DNA"/>
</dbReference>
<dbReference type="EMBL" id="BT020481">
    <property type="protein sequence ID" value="AAW38982.1"/>
    <property type="molecule type" value="mRNA"/>
</dbReference>
<dbReference type="EMBL" id="BT033130">
    <property type="protein sequence ID" value="ACF28391.1"/>
    <property type="molecule type" value="mRNA"/>
</dbReference>
<dbReference type="PIR" id="A85016">
    <property type="entry name" value="A85016"/>
</dbReference>
<dbReference type="RefSeq" id="NP_567211.1">
    <molecule id="Q9M146-2"/>
    <property type="nucleotide sequence ID" value="NM_116352.3"/>
</dbReference>
<dbReference type="RefSeq" id="NP_849279.1">
    <molecule id="Q9M146-1"/>
    <property type="nucleotide sequence ID" value="NM_178948.3"/>
</dbReference>
<dbReference type="FunCoup" id="Q9M146">
    <property type="interactions" value="411"/>
</dbReference>
<dbReference type="STRING" id="3702.Q9M146"/>
<dbReference type="CAZy" id="GT77">
    <property type="family name" value="Glycosyltransferase Family 77"/>
</dbReference>
<dbReference type="GlyCosmos" id="Q9M146">
    <property type="glycosylation" value="4 sites, No reported glycans"/>
</dbReference>
<dbReference type="GlyGen" id="Q9M146">
    <property type="glycosylation" value="4 sites"/>
</dbReference>
<dbReference type="PaxDb" id="3702-AT4G01220.1"/>
<dbReference type="ProteomicsDB" id="239060">
    <molecule id="Q9M146-1"/>
</dbReference>
<dbReference type="EnsemblPlants" id="AT4G01220.1">
    <molecule id="Q9M146-1"/>
    <property type="protein sequence ID" value="AT4G01220.1"/>
    <property type="gene ID" value="AT4G01220"/>
</dbReference>
<dbReference type="EnsemblPlants" id="AT4G01220.2">
    <molecule id="Q9M146-2"/>
    <property type="protein sequence ID" value="AT4G01220.2"/>
    <property type="gene ID" value="AT4G01220"/>
</dbReference>
<dbReference type="GeneID" id="828028"/>
<dbReference type="Gramene" id="AT4G01220.1">
    <molecule id="Q9M146-1"/>
    <property type="protein sequence ID" value="AT4G01220.1"/>
    <property type="gene ID" value="AT4G01220"/>
</dbReference>
<dbReference type="Gramene" id="AT4G01220.2">
    <molecule id="Q9M146-2"/>
    <property type="protein sequence ID" value="AT4G01220.2"/>
    <property type="gene ID" value="AT4G01220"/>
</dbReference>
<dbReference type="KEGG" id="ath:AT4G01220"/>
<dbReference type="Araport" id="AT4G01220"/>
<dbReference type="TAIR" id="AT4G01220">
    <property type="gene designation" value="MGP4"/>
</dbReference>
<dbReference type="eggNOG" id="ENOG502QT5X">
    <property type="taxonomic scope" value="Eukaryota"/>
</dbReference>
<dbReference type="HOGENOM" id="CLU_051257_0_0_1"/>
<dbReference type="InParanoid" id="Q9M146"/>
<dbReference type="OMA" id="GAKLIMK"/>
<dbReference type="PhylomeDB" id="Q9M146"/>
<dbReference type="PRO" id="PR:Q9M146"/>
<dbReference type="Proteomes" id="UP000006548">
    <property type="component" value="Chromosome 4"/>
</dbReference>
<dbReference type="ExpressionAtlas" id="Q9M146">
    <property type="expression patterns" value="baseline and differential"/>
</dbReference>
<dbReference type="GO" id="GO:0005794">
    <property type="term" value="C:Golgi apparatus"/>
    <property type="evidence" value="ECO:0000314"/>
    <property type="project" value="TAIR"/>
</dbReference>
<dbReference type="GO" id="GO:0000139">
    <property type="term" value="C:Golgi membrane"/>
    <property type="evidence" value="ECO:0007669"/>
    <property type="project" value="UniProtKB-SubCell"/>
</dbReference>
<dbReference type="GO" id="GO:0000138">
    <property type="term" value="C:Golgi trans cisterna"/>
    <property type="evidence" value="ECO:0007005"/>
    <property type="project" value="TAIR"/>
</dbReference>
<dbReference type="GO" id="GO:0042285">
    <property type="term" value="F:xylosyltransferase activity"/>
    <property type="evidence" value="ECO:0000314"/>
    <property type="project" value="TAIR"/>
</dbReference>
<dbReference type="GO" id="GO:0048868">
    <property type="term" value="P:pollen tube development"/>
    <property type="evidence" value="ECO:0000315"/>
    <property type="project" value="TAIR"/>
</dbReference>
<dbReference type="GO" id="GO:0010306">
    <property type="term" value="P:rhamnogalacturonan II biosynthetic process"/>
    <property type="evidence" value="ECO:0000315"/>
    <property type="project" value="TAIR"/>
</dbReference>
<dbReference type="InterPro" id="IPR005069">
    <property type="entry name" value="Nucl-diP-sugar_transferase"/>
</dbReference>
<dbReference type="InterPro" id="IPR029044">
    <property type="entry name" value="Nucleotide-diphossugar_trans"/>
</dbReference>
<dbReference type="InterPro" id="IPR052636">
    <property type="entry name" value="UDP-D-xylose:L-fucose_XylT"/>
</dbReference>
<dbReference type="PANTHER" id="PTHR47032">
    <property type="entry name" value="UDP-D-XYLOSE:L-FUCOSE ALPHA-1,3-D-XYLOSYLTRANSFERASE-RELATED"/>
    <property type="match status" value="1"/>
</dbReference>
<dbReference type="PANTHER" id="PTHR47032:SF1">
    <property type="entry name" value="UDP-D-XYLOSE:L-FUCOSE ALPHA-1,3-D-XYLOSYLTRANSFERASE-RELATED"/>
    <property type="match status" value="1"/>
</dbReference>
<dbReference type="Pfam" id="PF03407">
    <property type="entry name" value="Nucleotid_trans"/>
    <property type="match status" value="1"/>
</dbReference>
<dbReference type="SUPFAM" id="SSF53448">
    <property type="entry name" value="Nucleotide-diphospho-sugar transferases"/>
    <property type="match status" value="1"/>
</dbReference>
<name>MGP4_ARATH</name>
<organism>
    <name type="scientific">Arabidopsis thaliana</name>
    <name type="common">Mouse-ear cress</name>
    <dbReference type="NCBI Taxonomy" id="3702"/>
    <lineage>
        <taxon>Eukaryota</taxon>
        <taxon>Viridiplantae</taxon>
        <taxon>Streptophyta</taxon>
        <taxon>Embryophyta</taxon>
        <taxon>Tracheophyta</taxon>
        <taxon>Spermatophyta</taxon>
        <taxon>Magnoliopsida</taxon>
        <taxon>eudicotyledons</taxon>
        <taxon>Gunneridae</taxon>
        <taxon>Pentapetalae</taxon>
        <taxon>rosids</taxon>
        <taxon>malvids</taxon>
        <taxon>Brassicales</taxon>
        <taxon>Brassicaceae</taxon>
        <taxon>Camelineae</taxon>
        <taxon>Arabidopsis</taxon>
    </lineage>
</organism>
<gene>
    <name evidence="8" type="primary">MGP4</name>
    <name type="ordered locus">At4g01220</name>
    <name type="ORF">F2N1.35</name>
</gene>
<comment type="function">
    <text evidence="5">Catalyzes the transfer of D-xylose from UDP-alpha-D-xylose onto L-fucose. Probably involved in the biosynthesis of rhamnogalacturonan II (RG-II) through xylosylation of the internal fucose moiety of the A-chain of RG-II, a structurally complex pectic polysaccharide of the primary cell wall. RG-II is essential for the cell wall integrity of rapidly growing tissues such as roots and pollen tube growth and elongation.</text>
</comment>
<comment type="cofactor">
    <cofactor evidence="1">
        <name>Mn(2+)</name>
        <dbReference type="ChEBI" id="CHEBI:29035"/>
    </cofactor>
    <cofactor evidence="1">
        <name>Mg(2+)</name>
        <dbReference type="ChEBI" id="CHEBI:18420"/>
    </cofactor>
</comment>
<comment type="subcellular location">
    <subcellularLocation>
        <location evidence="11 12">Golgi apparatus membrane</location>
        <topology evidence="11 12">Single-pass type II membrane protein</topology>
    </subcellularLocation>
</comment>
<comment type="alternative products">
    <event type="alternative splicing"/>
    <isoform>
        <id>Q9M146-1</id>
        <name>1</name>
        <sequence type="displayed"/>
    </isoform>
    <isoform>
        <id>Q9M146-2</id>
        <name>2</name>
        <sequence type="described" ref="VSP_053260 VSP_053261"/>
    </isoform>
</comment>
<comment type="tissue specificity">
    <text evidence="5 6">Widely expressed.</text>
</comment>
<comment type="domain">
    <text evidence="2">The conserved DXD motif is involved in enzyme activity.</text>
</comment>
<comment type="disruption phenotype">
    <text evidence="5">Reduced fertility due to impaired growth of pollen tubes in the transmitting tract during fertilization.</text>
</comment>
<comment type="similarity">
    <text evidence="10">Belongs to the glycosyltransferase 77 family.</text>
</comment>
<keyword id="KW-0025">Alternative splicing</keyword>
<keyword id="KW-0961">Cell wall biogenesis/degradation</keyword>
<keyword id="KW-0325">Glycoprotein</keyword>
<keyword id="KW-0328">Glycosyltransferase</keyword>
<keyword id="KW-0333">Golgi apparatus</keyword>
<keyword id="KW-0472">Membrane</keyword>
<keyword id="KW-1185">Reference proteome</keyword>
<keyword id="KW-0735">Signal-anchor</keyword>
<keyword id="KW-0808">Transferase</keyword>
<keyword id="KW-0812">Transmembrane</keyword>
<keyword id="KW-1133">Transmembrane helix</keyword>
<evidence type="ECO:0000250" key="1"/>
<evidence type="ECO:0000250" key="2">
    <source>
        <dbReference type="UniProtKB" id="Q9JI93"/>
    </source>
</evidence>
<evidence type="ECO:0000255" key="3"/>
<evidence type="ECO:0000256" key="4">
    <source>
        <dbReference type="SAM" id="MobiDB-lite"/>
    </source>
</evidence>
<evidence type="ECO:0000269" key="5">
    <source>
    </source>
</evidence>
<evidence type="ECO:0000269" key="6">
    <source>
    </source>
</evidence>
<evidence type="ECO:0000303" key="7">
    <source>
    </source>
</evidence>
<evidence type="ECO:0000303" key="8">
    <source>
    </source>
</evidence>
<evidence type="ECO:0000303" key="9">
    <source ref="4"/>
</evidence>
<evidence type="ECO:0000305" key="10"/>
<evidence type="ECO:0000305" key="11">
    <source>
    </source>
</evidence>
<evidence type="ECO:0000305" key="12">
    <source>
    </source>
</evidence>